<protein>
    <recommendedName>
        <fullName evidence="1">Heptaprenylglyceryl phosphate synthase</fullName>
        <shortName evidence="1">HepGP synthase</shortName>
        <ecNumber evidence="1">2.5.1.n9</ecNumber>
    </recommendedName>
    <alternativeName>
        <fullName evidence="1">Glycerol-1-phosphate heptaprenyltransferase</fullName>
    </alternativeName>
</protein>
<comment type="function">
    <text evidence="1">Prenyltransferase that catalyzes in vivo the transfer of the heptaprenyl moiety of heptaprenyl pyrophosphate (HepPP; 35 carbon atoms) to the C3 hydroxyl of sn-glycerol-1-phosphate (G1P), producing heptaprenylglyceryl phosphate (HepGP). This reaction is an ether-bond-formation step in the biosynthesis of archaea-type G1P-based membrane lipids found in Bacillales.</text>
</comment>
<comment type="catalytic activity">
    <reaction evidence="1">
        <text>sn-glycerol 1-phosphate + all-trans-heptaprenyl diphosphate = 3-heptaprenyl-sn-glycero-1-phosphate + diphosphate</text>
        <dbReference type="Rhea" id="RHEA:33495"/>
        <dbReference type="ChEBI" id="CHEBI:33019"/>
        <dbReference type="ChEBI" id="CHEBI:57685"/>
        <dbReference type="ChEBI" id="CHEBI:58206"/>
        <dbReference type="ChEBI" id="CHEBI:64781"/>
        <dbReference type="EC" id="2.5.1.n9"/>
    </reaction>
</comment>
<comment type="cofactor">
    <cofactor evidence="1">
        <name>Mg(2+)</name>
        <dbReference type="ChEBI" id="CHEBI:18420"/>
    </cofactor>
</comment>
<comment type="pathway">
    <text evidence="1">Membrane lipid metabolism; glycerophospholipid metabolism.</text>
</comment>
<comment type="subunit">
    <text evidence="1">Homodimer.</text>
</comment>
<comment type="similarity">
    <text evidence="1">Belongs to the GGGP/HepGP synthase family. Group I subfamily.</text>
</comment>
<keyword id="KW-0444">Lipid biosynthesis</keyword>
<keyword id="KW-0443">Lipid metabolism</keyword>
<keyword id="KW-0460">Magnesium</keyword>
<keyword id="KW-0479">Metal-binding</keyword>
<keyword id="KW-0594">Phospholipid biosynthesis</keyword>
<keyword id="KW-1208">Phospholipid metabolism</keyword>
<keyword id="KW-1185">Reference proteome</keyword>
<keyword id="KW-0808">Transferase</keyword>
<proteinExistence type="inferred from homology"/>
<feature type="chain" id="PRO_0000138705" description="Heptaprenylglyceryl phosphate synthase">
    <location>
        <begin position="1"/>
        <end position="229"/>
    </location>
</feature>
<feature type="binding site" evidence="1">
    <location>
        <position position="12"/>
    </location>
    <ligand>
        <name>sn-glycerol 1-phosphate</name>
        <dbReference type="ChEBI" id="CHEBI:57685"/>
    </ligand>
</feature>
<feature type="binding site" evidence="1">
    <location>
        <position position="14"/>
    </location>
    <ligand>
        <name>Mg(2+)</name>
        <dbReference type="ChEBI" id="CHEBI:18420"/>
    </ligand>
</feature>
<feature type="binding site" evidence="1">
    <location>
        <position position="40"/>
    </location>
    <ligand>
        <name>Mg(2+)</name>
        <dbReference type="ChEBI" id="CHEBI:18420"/>
    </ligand>
</feature>
<feature type="binding site" evidence="1">
    <location>
        <begin position="159"/>
        <end position="164"/>
    </location>
    <ligand>
        <name>sn-glycerol 1-phosphate</name>
        <dbReference type="ChEBI" id="CHEBI:57685"/>
    </ligand>
</feature>
<feature type="binding site" evidence="1">
    <location>
        <position position="189"/>
    </location>
    <ligand>
        <name>sn-glycerol 1-phosphate</name>
        <dbReference type="ChEBI" id="CHEBI:57685"/>
    </ligand>
</feature>
<feature type="binding site" evidence="1">
    <location>
        <begin position="209"/>
        <end position="210"/>
    </location>
    <ligand>
        <name>sn-glycerol 1-phosphate</name>
        <dbReference type="ChEBI" id="CHEBI:57685"/>
    </ligand>
</feature>
<organism>
    <name type="scientific">Bacillus cereus (strain ATCC 14579 / DSM 31 / CCUG 7414 / JCM 2152 / NBRC 15305 / NCIMB 9373 / NCTC 2599 / NRRL B-3711)</name>
    <dbReference type="NCBI Taxonomy" id="226900"/>
    <lineage>
        <taxon>Bacteria</taxon>
        <taxon>Bacillati</taxon>
        <taxon>Bacillota</taxon>
        <taxon>Bacilli</taxon>
        <taxon>Bacillales</taxon>
        <taxon>Bacillaceae</taxon>
        <taxon>Bacillus</taxon>
        <taxon>Bacillus cereus group</taxon>
    </lineage>
</organism>
<dbReference type="EC" id="2.5.1.n9" evidence="1"/>
<dbReference type="EMBL" id="AE016877">
    <property type="protein sequence ID" value="AAP07379.1"/>
    <property type="molecule type" value="Genomic_DNA"/>
</dbReference>
<dbReference type="RefSeq" id="NP_830178.1">
    <property type="nucleotide sequence ID" value="NC_004722.1"/>
</dbReference>
<dbReference type="RefSeq" id="WP_000272099.1">
    <property type="nucleotide sequence ID" value="NZ_CP138336.1"/>
</dbReference>
<dbReference type="SMR" id="Q81IP4"/>
<dbReference type="STRING" id="226900.BC_0339"/>
<dbReference type="KEGG" id="bce:BC0339"/>
<dbReference type="PATRIC" id="fig|226900.8.peg.310"/>
<dbReference type="HOGENOM" id="CLU_095211_0_0_9"/>
<dbReference type="OrthoDB" id="2381757at2"/>
<dbReference type="UniPathway" id="UPA00940"/>
<dbReference type="Proteomes" id="UP000001417">
    <property type="component" value="Chromosome"/>
</dbReference>
<dbReference type="GO" id="GO:0120536">
    <property type="term" value="F:heptaprenylglyceryl phosphate synthase activity"/>
    <property type="evidence" value="ECO:0007669"/>
    <property type="project" value="RHEA"/>
</dbReference>
<dbReference type="GO" id="GO:0000287">
    <property type="term" value="F:magnesium ion binding"/>
    <property type="evidence" value="ECO:0007669"/>
    <property type="project" value="UniProtKB-UniRule"/>
</dbReference>
<dbReference type="GO" id="GO:0046474">
    <property type="term" value="P:glycerophospholipid biosynthetic process"/>
    <property type="evidence" value="ECO:0000318"/>
    <property type="project" value="GO_Central"/>
</dbReference>
<dbReference type="CDD" id="cd02812">
    <property type="entry name" value="PcrB_like"/>
    <property type="match status" value="1"/>
</dbReference>
<dbReference type="FunFam" id="3.20.20.390:FF:000001">
    <property type="entry name" value="Heptaprenylglyceryl phosphate synthase"/>
    <property type="match status" value="1"/>
</dbReference>
<dbReference type="Gene3D" id="3.20.20.390">
    <property type="entry name" value="FMN-linked oxidoreductases"/>
    <property type="match status" value="1"/>
</dbReference>
<dbReference type="HAMAP" id="MF_00112">
    <property type="entry name" value="GGGP_HepGP_synthase"/>
    <property type="match status" value="1"/>
</dbReference>
<dbReference type="InterPro" id="IPR039074">
    <property type="entry name" value="GGGP/HepGP_synthase_I"/>
</dbReference>
<dbReference type="InterPro" id="IPR038597">
    <property type="entry name" value="GGGP/HepGP_synthase_sf"/>
</dbReference>
<dbReference type="InterPro" id="IPR008205">
    <property type="entry name" value="GGGP_HepGP_synthase"/>
</dbReference>
<dbReference type="NCBIfam" id="TIGR01768">
    <property type="entry name" value="GGGP-family"/>
    <property type="match status" value="1"/>
</dbReference>
<dbReference type="NCBIfam" id="NF003197">
    <property type="entry name" value="PRK04169.1-1"/>
    <property type="match status" value="1"/>
</dbReference>
<dbReference type="NCBIfam" id="NF003199">
    <property type="entry name" value="PRK04169.1-3"/>
    <property type="match status" value="1"/>
</dbReference>
<dbReference type="PANTHER" id="PTHR40029">
    <property type="match status" value="1"/>
</dbReference>
<dbReference type="PANTHER" id="PTHR40029:SF2">
    <property type="entry name" value="HEPTAPRENYLGLYCERYL PHOSPHATE SYNTHASE"/>
    <property type="match status" value="1"/>
</dbReference>
<dbReference type="Pfam" id="PF01884">
    <property type="entry name" value="PcrB"/>
    <property type="match status" value="1"/>
</dbReference>
<dbReference type="SUPFAM" id="SSF51395">
    <property type="entry name" value="FMN-linked oxidoreductases"/>
    <property type="match status" value="1"/>
</dbReference>
<gene>
    <name evidence="1" type="primary">pcrB</name>
    <name type="ordered locus">BC_0339</name>
</gene>
<accession>Q81IP4</accession>
<reference key="1">
    <citation type="journal article" date="2003" name="Nature">
        <title>Genome sequence of Bacillus cereus and comparative analysis with Bacillus anthracis.</title>
        <authorList>
            <person name="Ivanova N."/>
            <person name="Sorokin A."/>
            <person name="Anderson I."/>
            <person name="Galleron N."/>
            <person name="Candelon B."/>
            <person name="Kapatral V."/>
            <person name="Bhattacharyya A."/>
            <person name="Reznik G."/>
            <person name="Mikhailova N."/>
            <person name="Lapidus A."/>
            <person name="Chu L."/>
            <person name="Mazur M."/>
            <person name="Goltsman E."/>
            <person name="Larsen N."/>
            <person name="D'Souza M."/>
            <person name="Walunas T."/>
            <person name="Grechkin Y."/>
            <person name="Pusch G."/>
            <person name="Haselkorn R."/>
            <person name="Fonstein M."/>
            <person name="Ehrlich S.D."/>
            <person name="Overbeek R."/>
            <person name="Kyrpides N.C."/>
        </authorList>
    </citation>
    <scope>NUCLEOTIDE SEQUENCE [LARGE SCALE GENOMIC DNA]</scope>
    <source>
        <strain>ATCC 14579 / DSM 31 / CCUG 7414 / JCM 2152 / NBRC 15305 / NCIMB 9373 / NCTC 2599 / NRRL B-3711</strain>
    </source>
</reference>
<sequence length="229" mass="25569">MYDISGWKHVFKLDPNKELSDEHLEMICESGTDAVIVGGSDGVTIDNVLHMLVSIRRYAVPCVLEVSDVEAITPGFDFYYIPSVLNSRKVEWVTGVHHEALKEFGDIMDWDEIFMEGYCVLNPEAKVAQLTEAKCDLTEDDVIAYARLADKLLHLPIFYLEYSGTYGDVELVKNVKAELKQAKLYYGGGISNAEQAKEMAQYADTVVVGNIIYDDIKSALKTVKAVKGE</sequence>
<name>PCRB_BACCR</name>
<evidence type="ECO:0000255" key="1">
    <source>
        <dbReference type="HAMAP-Rule" id="MF_00112"/>
    </source>
</evidence>